<dbReference type="EC" id="2.7.2.11" evidence="1"/>
<dbReference type="EMBL" id="CU468230">
    <property type="protein sequence ID" value="CAP00339.1"/>
    <property type="molecule type" value="Genomic_DNA"/>
</dbReference>
<dbReference type="SMR" id="B0VTQ2"/>
<dbReference type="KEGG" id="abm:ABSDF0980"/>
<dbReference type="HOGENOM" id="CLU_025400_2_0_6"/>
<dbReference type="UniPathway" id="UPA00098">
    <property type="reaction ID" value="UER00359"/>
</dbReference>
<dbReference type="Proteomes" id="UP000001741">
    <property type="component" value="Chromosome"/>
</dbReference>
<dbReference type="GO" id="GO:0005829">
    <property type="term" value="C:cytosol"/>
    <property type="evidence" value="ECO:0007669"/>
    <property type="project" value="TreeGrafter"/>
</dbReference>
<dbReference type="GO" id="GO:0005524">
    <property type="term" value="F:ATP binding"/>
    <property type="evidence" value="ECO:0007669"/>
    <property type="project" value="UniProtKB-KW"/>
</dbReference>
<dbReference type="GO" id="GO:0004349">
    <property type="term" value="F:glutamate 5-kinase activity"/>
    <property type="evidence" value="ECO:0007669"/>
    <property type="project" value="UniProtKB-UniRule"/>
</dbReference>
<dbReference type="GO" id="GO:0003723">
    <property type="term" value="F:RNA binding"/>
    <property type="evidence" value="ECO:0007669"/>
    <property type="project" value="InterPro"/>
</dbReference>
<dbReference type="GO" id="GO:0055129">
    <property type="term" value="P:L-proline biosynthetic process"/>
    <property type="evidence" value="ECO:0007669"/>
    <property type="project" value="UniProtKB-UniRule"/>
</dbReference>
<dbReference type="CDD" id="cd04242">
    <property type="entry name" value="AAK_G5K_ProB"/>
    <property type="match status" value="1"/>
</dbReference>
<dbReference type="CDD" id="cd21157">
    <property type="entry name" value="PUA_G5K"/>
    <property type="match status" value="1"/>
</dbReference>
<dbReference type="FunFam" id="3.40.1160.10:FF:000018">
    <property type="entry name" value="Glutamate 5-kinase"/>
    <property type="match status" value="1"/>
</dbReference>
<dbReference type="Gene3D" id="3.40.1160.10">
    <property type="entry name" value="Acetylglutamate kinase-like"/>
    <property type="match status" value="2"/>
</dbReference>
<dbReference type="Gene3D" id="2.30.130.10">
    <property type="entry name" value="PUA domain"/>
    <property type="match status" value="1"/>
</dbReference>
<dbReference type="HAMAP" id="MF_00456">
    <property type="entry name" value="ProB"/>
    <property type="match status" value="1"/>
</dbReference>
<dbReference type="InterPro" id="IPR036393">
    <property type="entry name" value="AceGlu_kinase-like_sf"/>
</dbReference>
<dbReference type="InterPro" id="IPR001048">
    <property type="entry name" value="Asp/Glu/Uridylate_kinase"/>
</dbReference>
<dbReference type="InterPro" id="IPR041739">
    <property type="entry name" value="G5K_ProB"/>
</dbReference>
<dbReference type="InterPro" id="IPR001057">
    <property type="entry name" value="Glu/AcGlu_kinase"/>
</dbReference>
<dbReference type="InterPro" id="IPR011529">
    <property type="entry name" value="Glu_5kinase"/>
</dbReference>
<dbReference type="InterPro" id="IPR005715">
    <property type="entry name" value="Glu_5kinase/COase_Synthase"/>
</dbReference>
<dbReference type="InterPro" id="IPR019797">
    <property type="entry name" value="Glutamate_5-kinase_CS"/>
</dbReference>
<dbReference type="InterPro" id="IPR002478">
    <property type="entry name" value="PUA"/>
</dbReference>
<dbReference type="InterPro" id="IPR015947">
    <property type="entry name" value="PUA-like_sf"/>
</dbReference>
<dbReference type="InterPro" id="IPR036974">
    <property type="entry name" value="PUA_sf"/>
</dbReference>
<dbReference type="NCBIfam" id="TIGR01027">
    <property type="entry name" value="proB"/>
    <property type="match status" value="1"/>
</dbReference>
<dbReference type="PANTHER" id="PTHR43654">
    <property type="entry name" value="GLUTAMATE 5-KINASE"/>
    <property type="match status" value="1"/>
</dbReference>
<dbReference type="PANTHER" id="PTHR43654:SF1">
    <property type="entry name" value="ISOPENTENYL PHOSPHATE KINASE"/>
    <property type="match status" value="1"/>
</dbReference>
<dbReference type="Pfam" id="PF00696">
    <property type="entry name" value="AA_kinase"/>
    <property type="match status" value="1"/>
</dbReference>
<dbReference type="Pfam" id="PF01472">
    <property type="entry name" value="PUA"/>
    <property type="match status" value="1"/>
</dbReference>
<dbReference type="PIRSF" id="PIRSF000729">
    <property type="entry name" value="GK"/>
    <property type="match status" value="1"/>
</dbReference>
<dbReference type="PRINTS" id="PR00474">
    <property type="entry name" value="GLU5KINASE"/>
</dbReference>
<dbReference type="SMART" id="SM00359">
    <property type="entry name" value="PUA"/>
    <property type="match status" value="1"/>
</dbReference>
<dbReference type="SUPFAM" id="SSF53633">
    <property type="entry name" value="Carbamate kinase-like"/>
    <property type="match status" value="1"/>
</dbReference>
<dbReference type="SUPFAM" id="SSF88697">
    <property type="entry name" value="PUA domain-like"/>
    <property type="match status" value="1"/>
</dbReference>
<dbReference type="PROSITE" id="PS00902">
    <property type="entry name" value="GLUTAMATE_5_KINASE"/>
    <property type="match status" value="1"/>
</dbReference>
<dbReference type="PROSITE" id="PS50890">
    <property type="entry name" value="PUA"/>
    <property type="match status" value="1"/>
</dbReference>
<gene>
    <name evidence="1" type="primary">proB</name>
    <name type="ordered locus">ABSDF0980</name>
</gene>
<organism>
    <name type="scientific">Acinetobacter baumannii (strain SDF)</name>
    <dbReference type="NCBI Taxonomy" id="509170"/>
    <lineage>
        <taxon>Bacteria</taxon>
        <taxon>Pseudomonadati</taxon>
        <taxon>Pseudomonadota</taxon>
        <taxon>Gammaproteobacteria</taxon>
        <taxon>Moraxellales</taxon>
        <taxon>Moraxellaceae</taxon>
        <taxon>Acinetobacter</taxon>
        <taxon>Acinetobacter calcoaceticus/baumannii complex</taxon>
    </lineage>
</organism>
<feature type="chain" id="PRO_1000125205" description="Glutamate 5-kinase">
    <location>
        <begin position="1"/>
        <end position="377"/>
    </location>
</feature>
<feature type="domain" description="PUA" evidence="1">
    <location>
        <begin position="285"/>
        <end position="363"/>
    </location>
</feature>
<feature type="binding site" evidence="1">
    <location>
        <position position="20"/>
    </location>
    <ligand>
        <name>ATP</name>
        <dbReference type="ChEBI" id="CHEBI:30616"/>
    </ligand>
</feature>
<feature type="binding site" evidence="1">
    <location>
        <position position="60"/>
    </location>
    <ligand>
        <name>substrate</name>
    </ligand>
</feature>
<feature type="binding site" evidence="1">
    <location>
        <position position="147"/>
    </location>
    <ligand>
        <name>substrate</name>
    </ligand>
</feature>
<feature type="binding site" evidence="1">
    <location>
        <position position="159"/>
    </location>
    <ligand>
        <name>substrate</name>
    </ligand>
</feature>
<feature type="binding site" evidence="1">
    <location>
        <begin position="179"/>
        <end position="180"/>
    </location>
    <ligand>
        <name>ATP</name>
        <dbReference type="ChEBI" id="CHEBI:30616"/>
    </ligand>
</feature>
<sequence>MIEVVDGQRKLSECKRIVVKIGSSLLTANGQGLDLDAISHWAKQIADLHNAGHEIILVSSGAVAEGMVRMKLASRPTDLPSLQACAAIGQMGLIHTWSSVLENHSIRAAQVLLTHDDLADRRRYLNSCDALQNLIDWRVIPVINENDTVSTDEIRFGDNDTLAAMVAGQVHADLLIILTDQQGMFDSDPRHNPDAKLLSTVRATDDVLFEMAGGGGVLGRGGMVTKVRAARLAAKSGCPTLIASGESDNVLSRVMAGEMLGTLFTTDKDRMTAHQQWLAAHLQTAGRLVIDDGAVEAIKLKHRSLLPVGVKTVEGHFDRGDVVECVDKQGKRVAVGRVNFSSRSAEIIKGLSSDKVYQVLGEARSLEMIHRDHMAIY</sequence>
<protein>
    <recommendedName>
        <fullName evidence="1">Glutamate 5-kinase</fullName>
        <ecNumber evidence="1">2.7.2.11</ecNumber>
    </recommendedName>
    <alternativeName>
        <fullName evidence="1">Gamma-glutamyl kinase</fullName>
        <shortName evidence="1">GK</shortName>
    </alternativeName>
</protein>
<name>PROB_ACIBS</name>
<proteinExistence type="inferred from homology"/>
<comment type="function">
    <text evidence="1">Catalyzes the transfer of a phosphate group to glutamate to form L-glutamate 5-phosphate.</text>
</comment>
<comment type="catalytic activity">
    <reaction evidence="1">
        <text>L-glutamate + ATP = L-glutamyl 5-phosphate + ADP</text>
        <dbReference type="Rhea" id="RHEA:14877"/>
        <dbReference type="ChEBI" id="CHEBI:29985"/>
        <dbReference type="ChEBI" id="CHEBI:30616"/>
        <dbReference type="ChEBI" id="CHEBI:58274"/>
        <dbReference type="ChEBI" id="CHEBI:456216"/>
        <dbReference type="EC" id="2.7.2.11"/>
    </reaction>
</comment>
<comment type="pathway">
    <text evidence="1">Amino-acid biosynthesis; L-proline biosynthesis; L-glutamate 5-semialdehyde from L-glutamate: step 1/2.</text>
</comment>
<comment type="subcellular location">
    <subcellularLocation>
        <location evidence="1">Cytoplasm</location>
    </subcellularLocation>
</comment>
<comment type="similarity">
    <text evidence="1">Belongs to the glutamate 5-kinase family.</text>
</comment>
<reference key="1">
    <citation type="journal article" date="2008" name="PLoS ONE">
        <title>Comparative analysis of Acinetobacters: three genomes for three lifestyles.</title>
        <authorList>
            <person name="Vallenet D."/>
            <person name="Nordmann P."/>
            <person name="Barbe V."/>
            <person name="Poirel L."/>
            <person name="Mangenot S."/>
            <person name="Bataille E."/>
            <person name="Dossat C."/>
            <person name="Gas S."/>
            <person name="Kreimeyer A."/>
            <person name="Lenoble P."/>
            <person name="Oztas S."/>
            <person name="Poulain J."/>
            <person name="Segurens B."/>
            <person name="Robert C."/>
            <person name="Abergel C."/>
            <person name="Claverie J.-M."/>
            <person name="Raoult D."/>
            <person name="Medigue C."/>
            <person name="Weissenbach J."/>
            <person name="Cruveiller S."/>
        </authorList>
    </citation>
    <scope>NUCLEOTIDE SEQUENCE [LARGE SCALE GENOMIC DNA]</scope>
    <source>
        <strain>SDF</strain>
    </source>
</reference>
<keyword id="KW-0028">Amino-acid biosynthesis</keyword>
<keyword id="KW-0067">ATP-binding</keyword>
<keyword id="KW-0963">Cytoplasm</keyword>
<keyword id="KW-0418">Kinase</keyword>
<keyword id="KW-0547">Nucleotide-binding</keyword>
<keyword id="KW-0641">Proline biosynthesis</keyword>
<keyword id="KW-0808">Transferase</keyword>
<accession>B0VTQ2</accession>
<evidence type="ECO:0000255" key="1">
    <source>
        <dbReference type="HAMAP-Rule" id="MF_00456"/>
    </source>
</evidence>